<protein>
    <recommendedName>
        <fullName>Polypeptide N-acetylgalactosaminyltransferase 3</fullName>
        <ecNumber evidence="8">2.4.1.41</ecNumber>
    </recommendedName>
    <alternativeName>
        <fullName>Polypeptide GalNAc transferase 3</fullName>
        <shortName>GalNAc-T3</shortName>
        <shortName>pp-GaNTase 3</shortName>
    </alternativeName>
    <alternativeName>
        <fullName>Protein-UDP acetylgalactosaminyltransferase 3</fullName>
    </alternativeName>
    <alternativeName>
        <fullName>UDP-GalNAc:polypeptide N-acetylgalactosaminyltransferase 3</fullName>
    </alternativeName>
</protein>
<organism>
    <name type="scientific">Mus musculus</name>
    <name type="common">Mouse</name>
    <dbReference type="NCBI Taxonomy" id="10090"/>
    <lineage>
        <taxon>Eukaryota</taxon>
        <taxon>Metazoa</taxon>
        <taxon>Chordata</taxon>
        <taxon>Craniata</taxon>
        <taxon>Vertebrata</taxon>
        <taxon>Euteleostomi</taxon>
        <taxon>Mammalia</taxon>
        <taxon>Eutheria</taxon>
        <taxon>Euarchontoglires</taxon>
        <taxon>Glires</taxon>
        <taxon>Rodentia</taxon>
        <taxon>Myomorpha</taxon>
        <taxon>Muroidea</taxon>
        <taxon>Muridae</taxon>
        <taxon>Murinae</taxon>
        <taxon>Mus</taxon>
        <taxon>Mus</taxon>
    </lineage>
</organism>
<evidence type="ECO:0000250" key="1">
    <source>
        <dbReference type="UniProtKB" id="H0ZAB5"/>
    </source>
</evidence>
<evidence type="ECO:0000250" key="2">
    <source>
        <dbReference type="UniProtKB" id="O08912"/>
    </source>
</evidence>
<evidence type="ECO:0000250" key="3">
    <source>
        <dbReference type="UniProtKB" id="Q14435"/>
    </source>
</evidence>
<evidence type="ECO:0000250" key="4">
    <source>
        <dbReference type="UniProtKB" id="Q8N4A0"/>
    </source>
</evidence>
<evidence type="ECO:0000255" key="5"/>
<evidence type="ECO:0000255" key="6">
    <source>
        <dbReference type="PROSITE-ProRule" id="PRU00174"/>
    </source>
</evidence>
<evidence type="ECO:0000256" key="7">
    <source>
        <dbReference type="SAM" id="MobiDB-lite"/>
    </source>
</evidence>
<evidence type="ECO:0000269" key="8">
    <source>
    </source>
</evidence>
<evidence type="ECO:0000305" key="9"/>
<name>GALT3_MOUSE</name>
<comment type="function">
    <text evidence="3 8">Catalyzes the initial reaction in O-linked oligosaccharide biosynthesis, the transfer of an N-acetyl-D-galactosamine residue to a serine or threonine residue on the protein receptor (PubMed:8912633). Has activity toward HIV envelope glycoprotein gp120 (By similarity). Has activity towards EA2, MUC2 and MUC5 (PubMed:8912633). Probably glycosylates fibronectin in vivo (By similarity). Glycosylates FGF23 (By similarity).</text>
</comment>
<comment type="catalytic activity">
    <reaction evidence="8">
        <text>L-seryl-[protein] + UDP-N-acetyl-alpha-D-galactosamine = a 3-O-[N-acetyl-alpha-D-galactosaminyl]-L-seryl-[protein] + UDP + H(+)</text>
        <dbReference type="Rhea" id="RHEA:23956"/>
        <dbReference type="Rhea" id="RHEA-COMP:9863"/>
        <dbReference type="Rhea" id="RHEA-COMP:12788"/>
        <dbReference type="ChEBI" id="CHEBI:15378"/>
        <dbReference type="ChEBI" id="CHEBI:29999"/>
        <dbReference type="ChEBI" id="CHEBI:53604"/>
        <dbReference type="ChEBI" id="CHEBI:58223"/>
        <dbReference type="ChEBI" id="CHEBI:67138"/>
        <dbReference type="EC" id="2.4.1.41"/>
    </reaction>
</comment>
<comment type="catalytic activity">
    <reaction evidence="8">
        <text>L-threonyl-[protein] + UDP-N-acetyl-alpha-D-galactosamine = a 3-O-[N-acetyl-alpha-D-galactosaminyl]-L-threonyl-[protein] + UDP + H(+)</text>
        <dbReference type="Rhea" id="RHEA:52424"/>
        <dbReference type="Rhea" id="RHEA-COMP:11060"/>
        <dbReference type="Rhea" id="RHEA-COMP:11689"/>
        <dbReference type="ChEBI" id="CHEBI:15378"/>
        <dbReference type="ChEBI" id="CHEBI:30013"/>
        <dbReference type="ChEBI" id="CHEBI:58223"/>
        <dbReference type="ChEBI" id="CHEBI:67138"/>
        <dbReference type="ChEBI" id="CHEBI:87075"/>
        <dbReference type="EC" id="2.4.1.41"/>
    </reaction>
</comment>
<comment type="cofactor">
    <cofactor evidence="3">
        <name>Mn(2+)</name>
        <dbReference type="ChEBI" id="CHEBI:29035"/>
    </cofactor>
</comment>
<comment type="pathway">
    <text>Protein modification; protein glycosylation.</text>
</comment>
<comment type="subcellular location">
    <subcellularLocation>
        <location evidence="3">Golgi apparatus</location>
        <location evidence="3">Golgi stack membrane</location>
        <topology evidence="3">Single-pass type II membrane protein</topology>
    </subcellularLocation>
    <text evidence="3">Resides preferentially in the trans and medial parts of the Golgi stack.</text>
</comment>
<comment type="tissue specificity">
    <text evidence="8">Highly expressed in the reproductive tract, principally in the testis and uterus, and to a lesser degree in the cervix with only trace levels in the ovary. Also expressed at high level in sublingual gland, stomach and colon, with more moderate amounts present in the submandibular and parotid gland as well as the kidney.</text>
</comment>
<comment type="domain">
    <text evidence="2">There are two conserved domains in the glycosyltransferase region: the N-terminal domain (domain A, also called GT1 motif), which is probably involved in manganese coordination and substrate binding and the C-terminal domain (domain B, also called Gal/GalNAc-T motif), which is probably involved in catalytic reaction and UDP-Gal binding.</text>
</comment>
<comment type="domain">
    <text evidence="3 4">The ricin B-type lectin domain binds to GalNAc and contributes to the glycopeptide specificity (By similarity). Essential for glycosylation of FGF23 (By similarity).</text>
</comment>
<comment type="similarity">
    <text evidence="9">Belongs to the glycosyltransferase 2 family. GalNAc-T subfamily.</text>
</comment>
<comment type="online information" name="Functional Glycomics Gateway - GTase">
    <link uri="http://www.functionalglycomics.org/glycomics/molecule/jsp/glycoEnzyme/viewGlycoEnzyme.jsp?gbpId=gt_mou_512"/>
    <text>Polypeptide N-acetylgalactosaminyltransferase 3</text>
</comment>
<keyword id="KW-1015">Disulfide bond</keyword>
<keyword id="KW-0325">Glycoprotein</keyword>
<keyword id="KW-0328">Glycosyltransferase</keyword>
<keyword id="KW-0333">Golgi apparatus</keyword>
<keyword id="KW-0430">Lectin</keyword>
<keyword id="KW-0464">Manganese</keyword>
<keyword id="KW-0472">Membrane</keyword>
<keyword id="KW-0479">Metal-binding</keyword>
<keyword id="KW-1185">Reference proteome</keyword>
<keyword id="KW-0735">Signal-anchor</keyword>
<keyword id="KW-0808">Transferase</keyword>
<keyword id="KW-0812">Transmembrane</keyword>
<keyword id="KW-1133">Transmembrane helix</keyword>
<reference key="1">
    <citation type="journal article" date="1996" name="Biochem. Biophys. Res. Commun.">
        <title>Cloning and expression of mouse UDP-GalNAc:polypeptide N-acetylgalactosaminyltransferase-T3.</title>
        <authorList>
            <person name="Zara J."/>
            <person name="Hagen F.K."/>
            <person name="Ten Hagen K.G."/>
            <person name="Van Wuyckhuyse B.C."/>
            <person name="Tabak L.A."/>
        </authorList>
    </citation>
    <scope>NUCLEOTIDE SEQUENCE [MRNA]</scope>
    <scope>FUNCTION</scope>
    <scope>CATALYTIC ACTIVITY</scope>
    <scope>TISSUE SPECIFICITY</scope>
    <source>
        <strain>CD-1</strain>
        <tissue>Testis</tissue>
    </source>
</reference>
<reference key="2">
    <citation type="journal article" date="2005" name="Science">
        <title>The transcriptional landscape of the mammalian genome.</title>
        <authorList>
            <person name="Carninci P."/>
            <person name="Kasukawa T."/>
            <person name="Katayama S."/>
            <person name="Gough J."/>
            <person name="Frith M.C."/>
            <person name="Maeda N."/>
            <person name="Oyama R."/>
            <person name="Ravasi T."/>
            <person name="Lenhard B."/>
            <person name="Wells C."/>
            <person name="Kodzius R."/>
            <person name="Shimokawa K."/>
            <person name="Bajic V.B."/>
            <person name="Brenner S.E."/>
            <person name="Batalov S."/>
            <person name="Forrest A.R."/>
            <person name="Zavolan M."/>
            <person name="Davis M.J."/>
            <person name="Wilming L.G."/>
            <person name="Aidinis V."/>
            <person name="Allen J.E."/>
            <person name="Ambesi-Impiombato A."/>
            <person name="Apweiler R."/>
            <person name="Aturaliya R.N."/>
            <person name="Bailey T.L."/>
            <person name="Bansal M."/>
            <person name="Baxter L."/>
            <person name="Beisel K.W."/>
            <person name="Bersano T."/>
            <person name="Bono H."/>
            <person name="Chalk A.M."/>
            <person name="Chiu K.P."/>
            <person name="Choudhary V."/>
            <person name="Christoffels A."/>
            <person name="Clutterbuck D.R."/>
            <person name="Crowe M.L."/>
            <person name="Dalla E."/>
            <person name="Dalrymple B.P."/>
            <person name="de Bono B."/>
            <person name="Della Gatta G."/>
            <person name="di Bernardo D."/>
            <person name="Down T."/>
            <person name="Engstrom P."/>
            <person name="Fagiolini M."/>
            <person name="Faulkner G."/>
            <person name="Fletcher C.F."/>
            <person name="Fukushima T."/>
            <person name="Furuno M."/>
            <person name="Futaki S."/>
            <person name="Gariboldi M."/>
            <person name="Georgii-Hemming P."/>
            <person name="Gingeras T.R."/>
            <person name="Gojobori T."/>
            <person name="Green R.E."/>
            <person name="Gustincich S."/>
            <person name="Harbers M."/>
            <person name="Hayashi Y."/>
            <person name="Hensch T.K."/>
            <person name="Hirokawa N."/>
            <person name="Hill D."/>
            <person name="Huminiecki L."/>
            <person name="Iacono M."/>
            <person name="Ikeo K."/>
            <person name="Iwama A."/>
            <person name="Ishikawa T."/>
            <person name="Jakt M."/>
            <person name="Kanapin A."/>
            <person name="Katoh M."/>
            <person name="Kawasawa Y."/>
            <person name="Kelso J."/>
            <person name="Kitamura H."/>
            <person name="Kitano H."/>
            <person name="Kollias G."/>
            <person name="Krishnan S.P."/>
            <person name="Kruger A."/>
            <person name="Kummerfeld S.K."/>
            <person name="Kurochkin I.V."/>
            <person name="Lareau L.F."/>
            <person name="Lazarevic D."/>
            <person name="Lipovich L."/>
            <person name="Liu J."/>
            <person name="Liuni S."/>
            <person name="McWilliam S."/>
            <person name="Madan Babu M."/>
            <person name="Madera M."/>
            <person name="Marchionni L."/>
            <person name="Matsuda H."/>
            <person name="Matsuzawa S."/>
            <person name="Miki H."/>
            <person name="Mignone F."/>
            <person name="Miyake S."/>
            <person name="Morris K."/>
            <person name="Mottagui-Tabar S."/>
            <person name="Mulder N."/>
            <person name="Nakano N."/>
            <person name="Nakauchi H."/>
            <person name="Ng P."/>
            <person name="Nilsson R."/>
            <person name="Nishiguchi S."/>
            <person name="Nishikawa S."/>
            <person name="Nori F."/>
            <person name="Ohara O."/>
            <person name="Okazaki Y."/>
            <person name="Orlando V."/>
            <person name="Pang K.C."/>
            <person name="Pavan W.J."/>
            <person name="Pavesi G."/>
            <person name="Pesole G."/>
            <person name="Petrovsky N."/>
            <person name="Piazza S."/>
            <person name="Reed J."/>
            <person name="Reid J.F."/>
            <person name="Ring B.Z."/>
            <person name="Ringwald M."/>
            <person name="Rost B."/>
            <person name="Ruan Y."/>
            <person name="Salzberg S.L."/>
            <person name="Sandelin A."/>
            <person name="Schneider C."/>
            <person name="Schoenbach C."/>
            <person name="Sekiguchi K."/>
            <person name="Semple C.A."/>
            <person name="Seno S."/>
            <person name="Sessa L."/>
            <person name="Sheng Y."/>
            <person name="Shibata Y."/>
            <person name="Shimada H."/>
            <person name="Shimada K."/>
            <person name="Silva D."/>
            <person name="Sinclair B."/>
            <person name="Sperling S."/>
            <person name="Stupka E."/>
            <person name="Sugiura K."/>
            <person name="Sultana R."/>
            <person name="Takenaka Y."/>
            <person name="Taki K."/>
            <person name="Tammoja K."/>
            <person name="Tan S.L."/>
            <person name="Tang S."/>
            <person name="Taylor M.S."/>
            <person name="Tegner J."/>
            <person name="Teichmann S.A."/>
            <person name="Ueda H.R."/>
            <person name="van Nimwegen E."/>
            <person name="Verardo R."/>
            <person name="Wei C.L."/>
            <person name="Yagi K."/>
            <person name="Yamanishi H."/>
            <person name="Zabarovsky E."/>
            <person name="Zhu S."/>
            <person name="Zimmer A."/>
            <person name="Hide W."/>
            <person name="Bult C."/>
            <person name="Grimmond S.M."/>
            <person name="Teasdale R.D."/>
            <person name="Liu E.T."/>
            <person name="Brusic V."/>
            <person name="Quackenbush J."/>
            <person name="Wahlestedt C."/>
            <person name="Mattick J.S."/>
            <person name="Hume D.A."/>
            <person name="Kai C."/>
            <person name="Sasaki D."/>
            <person name="Tomaru Y."/>
            <person name="Fukuda S."/>
            <person name="Kanamori-Katayama M."/>
            <person name="Suzuki M."/>
            <person name="Aoki J."/>
            <person name="Arakawa T."/>
            <person name="Iida J."/>
            <person name="Imamura K."/>
            <person name="Itoh M."/>
            <person name="Kato T."/>
            <person name="Kawaji H."/>
            <person name="Kawagashira N."/>
            <person name="Kawashima T."/>
            <person name="Kojima M."/>
            <person name="Kondo S."/>
            <person name="Konno H."/>
            <person name="Nakano K."/>
            <person name="Ninomiya N."/>
            <person name="Nishio T."/>
            <person name="Okada M."/>
            <person name="Plessy C."/>
            <person name="Shibata K."/>
            <person name="Shiraki T."/>
            <person name="Suzuki S."/>
            <person name="Tagami M."/>
            <person name="Waki K."/>
            <person name="Watahiki A."/>
            <person name="Okamura-Oho Y."/>
            <person name="Suzuki H."/>
            <person name="Kawai J."/>
            <person name="Hayashizaki Y."/>
        </authorList>
    </citation>
    <scope>NUCLEOTIDE SEQUENCE [LARGE SCALE MRNA]</scope>
    <source>
        <strain>C57BL/6J</strain>
        <tissue>Muellerian duct</tissue>
    </source>
</reference>
<reference key="3">
    <citation type="journal article" date="2009" name="PLoS Biol.">
        <title>Lineage-specific biology revealed by a finished genome assembly of the mouse.</title>
        <authorList>
            <person name="Church D.M."/>
            <person name="Goodstadt L."/>
            <person name="Hillier L.W."/>
            <person name="Zody M.C."/>
            <person name="Goldstein S."/>
            <person name="She X."/>
            <person name="Bult C.J."/>
            <person name="Agarwala R."/>
            <person name="Cherry J.L."/>
            <person name="DiCuccio M."/>
            <person name="Hlavina W."/>
            <person name="Kapustin Y."/>
            <person name="Meric P."/>
            <person name="Maglott D."/>
            <person name="Birtle Z."/>
            <person name="Marques A.C."/>
            <person name="Graves T."/>
            <person name="Zhou S."/>
            <person name="Teague B."/>
            <person name="Potamousis K."/>
            <person name="Churas C."/>
            <person name="Place M."/>
            <person name="Herschleb J."/>
            <person name="Runnheim R."/>
            <person name="Forrest D."/>
            <person name="Amos-Landgraf J."/>
            <person name="Schwartz D.C."/>
            <person name="Cheng Z."/>
            <person name="Lindblad-Toh K."/>
            <person name="Eichler E.E."/>
            <person name="Ponting C.P."/>
        </authorList>
    </citation>
    <scope>NUCLEOTIDE SEQUENCE [LARGE SCALE GENOMIC DNA]</scope>
    <source>
        <strain>C57BL/6J</strain>
    </source>
</reference>
<reference key="4">
    <citation type="submission" date="2005-07" db="EMBL/GenBank/DDBJ databases">
        <authorList>
            <person name="Mural R.J."/>
            <person name="Adams M.D."/>
            <person name="Myers E.W."/>
            <person name="Smith H.O."/>
            <person name="Venter J.C."/>
        </authorList>
    </citation>
    <scope>NUCLEOTIDE SEQUENCE [LARGE SCALE GENOMIC DNA]</scope>
</reference>
<reference key="5">
    <citation type="journal article" date="2004" name="Genome Res.">
        <title>The status, quality, and expansion of the NIH full-length cDNA project: the Mammalian Gene Collection (MGC).</title>
        <authorList>
            <consortium name="The MGC Project Team"/>
        </authorList>
    </citation>
    <scope>NUCLEOTIDE SEQUENCE [LARGE SCALE MRNA]</scope>
    <source>
        <strain>FVB/N</strain>
        <tissue>Mammary tumor</tissue>
    </source>
</reference>
<reference key="6">
    <citation type="journal article" date="2010" name="Cell">
        <title>A tissue-specific atlas of mouse protein phosphorylation and expression.</title>
        <authorList>
            <person name="Huttlin E.L."/>
            <person name="Jedrychowski M.P."/>
            <person name="Elias J.E."/>
            <person name="Goswami T."/>
            <person name="Rad R."/>
            <person name="Beausoleil S.A."/>
            <person name="Villen J."/>
            <person name="Haas W."/>
            <person name="Sowa M.E."/>
            <person name="Gygi S.P."/>
        </authorList>
    </citation>
    <scope>IDENTIFICATION BY MASS SPECTROMETRY [LARGE SCALE ANALYSIS]</scope>
    <source>
        <tissue>Kidney</tissue>
        <tissue>Pancreas</tissue>
        <tissue>Testis</tissue>
    </source>
</reference>
<feature type="chain" id="PRO_0000059107" description="Polypeptide N-acetylgalactosaminyltransferase 3">
    <location>
        <begin position="1"/>
        <end position="633"/>
    </location>
</feature>
<feature type="topological domain" description="Cytoplasmic" evidence="5">
    <location>
        <begin position="1"/>
        <end position="19"/>
    </location>
</feature>
<feature type="transmembrane region" description="Helical; Signal-anchor for type II membrane protein" evidence="5">
    <location>
        <begin position="20"/>
        <end position="37"/>
    </location>
</feature>
<feature type="topological domain" description="Lumenal" evidence="5">
    <location>
        <begin position="38"/>
        <end position="633"/>
    </location>
</feature>
<feature type="domain" description="Ricin B-type lectin" evidence="6">
    <location>
        <begin position="504"/>
        <end position="630"/>
    </location>
</feature>
<feature type="region of interest" description="Disordered" evidence="7">
    <location>
        <begin position="112"/>
        <end position="145"/>
    </location>
</feature>
<feature type="region of interest" description="Catalytic subdomain A">
    <location>
        <begin position="184"/>
        <end position="293"/>
    </location>
</feature>
<feature type="region of interest" description="Catalytic subdomain B">
    <location>
        <begin position="356"/>
        <end position="418"/>
    </location>
</feature>
<feature type="compositionally biased region" description="Basic and acidic residues" evidence="7">
    <location>
        <begin position="134"/>
        <end position="145"/>
    </location>
</feature>
<feature type="binding site" evidence="1">
    <location>
        <position position="277"/>
    </location>
    <ligand>
        <name>Mn(2+)</name>
        <dbReference type="ChEBI" id="CHEBI:29035"/>
    </ligand>
</feature>
<feature type="binding site" evidence="1">
    <location>
        <position position="279"/>
    </location>
    <ligand>
        <name>Mn(2+)</name>
        <dbReference type="ChEBI" id="CHEBI:29035"/>
    </ligand>
</feature>
<feature type="binding site" evidence="1">
    <location>
        <position position="415"/>
    </location>
    <ligand>
        <name>Mn(2+)</name>
        <dbReference type="ChEBI" id="CHEBI:29035"/>
    </ligand>
</feature>
<feature type="binding site" evidence="1">
    <location>
        <position position="519"/>
    </location>
    <ligand>
        <name>UDP-N-acetyl-alpha-D-galactosamine</name>
        <dbReference type="ChEBI" id="CHEBI:67138"/>
    </ligand>
</feature>
<feature type="binding site" evidence="1">
    <location>
        <position position="522"/>
    </location>
    <ligand>
        <name>UDP-N-acetyl-alpha-D-galactosamine</name>
        <dbReference type="ChEBI" id="CHEBI:67138"/>
    </ligand>
</feature>
<feature type="binding site" evidence="1">
    <location>
        <position position="536"/>
    </location>
    <ligand>
        <name>UDP-N-acetyl-alpha-D-galactosamine</name>
        <dbReference type="ChEBI" id="CHEBI:67138"/>
    </ligand>
</feature>
<feature type="binding site" evidence="1">
    <location>
        <position position="541"/>
    </location>
    <ligand>
        <name>UDP-N-acetyl-alpha-D-galactosamine</name>
        <dbReference type="ChEBI" id="CHEBI:67138"/>
    </ligand>
</feature>
<feature type="glycosylation site" description="N-linked (GlcNAc...) asparagine" evidence="5">
    <location>
        <position position="297"/>
    </location>
</feature>
<feature type="glycosylation site" description="N-linked (GlcNAc...) asparagine" evidence="5">
    <location>
        <position position="484"/>
    </location>
</feature>
<feature type="disulfide bond" evidence="6">
    <location>
        <begin position="517"/>
        <end position="535"/>
    </location>
</feature>
<feature type="disulfide bond" evidence="6">
    <location>
        <begin position="561"/>
        <end position="574"/>
    </location>
</feature>
<feature type="disulfide bond" evidence="6">
    <location>
        <begin position="605"/>
        <end position="618"/>
    </location>
</feature>
<feature type="sequence conflict" description="In Ref. 5; AAH43331." evidence="9" ref="5">
    <original>S</original>
    <variation>N</variation>
    <location>
        <position position="324"/>
    </location>
</feature>
<feature type="sequence conflict" description="In Ref. 1; AAB09579." evidence="9" ref="1">
    <original>D</original>
    <variation>E</variation>
    <location>
        <position position="633"/>
    </location>
</feature>
<dbReference type="EC" id="2.4.1.41" evidence="8"/>
<dbReference type="EMBL" id="U70538">
    <property type="protein sequence ID" value="AAB09579.1"/>
    <property type="molecule type" value="mRNA"/>
</dbReference>
<dbReference type="EMBL" id="AK135489">
    <property type="protein sequence ID" value="BAE22551.1"/>
    <property type="molecule type" value="mRNA"/>
</dbReference>
<dbReference type="EMBL" id="AL928586">
    <property type="status" value="NOT_ANNOTATED_CDS"/>
    <property type="molecule type" value="Genomic_DNA"/>
</dbReference>
<dbReference type="EMBL" id="AL929230">
    <property type="status" value="NOT_ANNOTATED_CDS"/>
    <property type="molecule type" value="Genomic_DNA"/>
</dbReference>
<dbReference type="EMBL" id="CH466519">
    <property type="protein sequence ID" value="EDL27008.1"/>
    <property type="molecule type" value="Genomic_DNA"/>
</dbReference>
<dbReference type="EMBL" id="BC043331">
    <property type="protein sequence ID" value="AAH43331.1"/>
    <property type="molecule type" value="mRNA"/>
</dbReference>
<dbReference type="CCDS" id="CCDS16075.1"/>
<dbReference type="PIR" id="JC5247">
    <property type="entry name" value="JC5247"/>
</dbReference>
<dbReference type="RefSeq" id="NP_056551.2">
    <property type="nucleotide sequence ID" value="NM_015736.3"/>
</dbReference>
<dbReference type="SMR" id="P70419"/>
<dbReference type="FunCoup" id="P70419">
    <property type="interactions" value="428"/>
</dbReference>
<dbReference type="STRING" id="10090.ENSMUSP00000028378"/>
<dbReference type="CAZy" id="CBM13">
    <property type="family name" value="Carbohydrate-Binding Module Family 13"/>
</dbReference>
<dbReference type="CAZy" id="GT27">
    <property type="family name" value="Glycosyltransferase Family 27"/>
</dbReference>
<dbReference type="GlyCosmos" id="P70419">
    <property type="glycosylation" value="2 sites, No reported glycans"/>
</dbReference>
<dbReference type="GlyGen" id="P70419">
    <property type="glycosylation" value="2 sites"/>
</dbReference>
<dbReference type="iPTMnet" id="P70419"/>
<dbReference type="PhosphoSitePlus" id="P70419"/>
<dbReference type="SwissPalm" id="P70419"/>
<dbReference type="jPOST" id="P70419"/>
<dbReference type="PaxDb" id="10090-ENSMUSP00000028378"/>
<dbReference type="PeptideAtlas" id="P70419"/>
<dbReference type="ProteomicsDB" id="268841"/>
<dbReference type="Antibodypedia" id="2358">
    <property type="antibodies" value="168 antibodies from 25 providers"/>
</dbReference>
<dbReference type="DNASU" id="14425"/>
<dbReference type="Ensembl" id="ENSMUST00000028378.4">
    <property type="protein sequence ID" value="ENSMUSP00000028378.4"/>
    <property type="gene ID" value="ENSMUSG00000026994.10"/>
</dbReference>
<dbReference type="GeneID" id="14425"/>
<dbReference type="KEGG" id="mmu:14425"/>
<dbReference type="UCSC" id="uc008jwu.2">
    <property type="organism name" value="mouse"/>
</dbReference>
<dbReference type="AGR" id="MGI:894695"/>
<dbReference type="CTD" id="2591"/>
<dbReference type="MGI" id="MGI:894695">
    <property type="gene designation" value="Galnt3"/>
</dbReference>
<dbReference type="VEuPathDB" id="HostDB:ENSMUSG00000026994"/>
<dbReference type="eggNOG" id="KOG3736">
    <property type="taxonomic scope" value="Eukaryota"/>
</dbReference>
<dbReference type="GeneTree" id="ENSGT00940000156609"/>
<dbReference type="HOGENOM" id="CLU_013477_0_3_1"/>
<dbReference type="InParanoid" id="P70419"/>
<dbReference type="OMA" id="IGCKLGF"/>
<dbReference type="OrthoDB" id="416652at2759"/>
<dbReference type="PhylomeDB" id="P70419"/>
<dbReference type="TreeFam" id="TF313267"/>
<dbReference type="BRENDA" id="2.4.1.41">
    <property type="organism ID" value="3474"/>
</dbReference>
<dbReference type="Reactome" id="R-MMU-190372">
    <property type="pathway name" value="FGFR3c ligand binding and activation"/>
</dbReference>
<dbReference type="Reactome" id="R-MMU-913709">
    <property type="pathway name" value="O-linked glycosylation of mucins"/>
</dbReference>
<dbReference type="UniPathway" id="UPA00378"/>
<dbReference type="BioGRID-ORCS" id="14425">
    <property type="hits" value="2 hits in 76 CRISPR screens"/>
</dbReference>
<dbReference type="ChiTaRS" id="Galnt3">
    <property type="organism name" value="mouse"/>
</dbReference>
<dbReference type="PRO" id="PR:P70419"/>
<dbReference type="Proteomes" id="UP000000589">
    <property type="component" value="Chromosome 2"/>
</dbReference>
<dbReference type="RNAct" id="P70419">
    <property type="molecule type" value="protein"/>
</dbReference>
<dbReference type="Bgee" id="ENSMUSG00000026994">
    <property type="expression patterns" value="Expressed in parotid gland and 155 other cell types or tissues"/>
</dbReference>
<dbReference type="GO" id="GO:0032580">
    <property type="term" value="C:Golgi cisterna membrane"/>
    <property type="evidence" value="ECO:0007669"/>
    <property type="project" value="UniProtKB-SubCell"/>
</dbReference>
<dbReference type="GO" id="GO:0048471">
    <property type="term" value="C:perinuclear region of cytoplasm"/>
    <property type="evidence" value="ECO:0007669"/>
    <property type="project" value="Ensembl"/>
</dbReference>
<dbReference type="GO" id="GO:0005509">
    <property type="term" value="F:calcium ion binding"/>
    <property type="evidence" value="ECO:0007669"/>
    <property type="project" value="Ensembl"/>
</dbReference>
<dbReference type="GO" id="GO:0030246">
    <property type="term" value="F:carbohydrate binding"/>
    <property type="evidence" value="ECO:0007669"/>
    <property type="project" value="UniProtKB-KW"/>
</dbReference>
<dbReference type="GO" id="GO:0030145">
    <property type="term" value="F:manganese ion binding"/>
    <property type="evidence" value="ECO:0007669"/>
    <property type="project" value="Ensembl"/>
</dbReference>
<dbReference type="GO" id="GO:0004653">
    <property type="term" value="F:polypeptide N-acetylgalactosaminyltransferase activity"/>
    <property type="evidence" value="ECO:0000314"/>
    <property type="project" value="UniProtKB"/>
</dbReference>
<dbReference type="GO" id="GO:0006915">
    <property type="term" value="P:apoptotic process"/>
    <property type="evidence" value="ECO:0000315"/>
    <property type="project" value="MGI"/>
</dbReference>
<dbReference type="GO" id="GO:0048469">
    <property type="term" value="P:cell maturation"/>
    <property type="evidence" value="ECO:0000315"/>
    <property type="project" value="MGI"/>
</dbReference>
<dbReference type="GO" id="GO:0002063">
    <property type="term" value="P:chondrocyte development"/>
    <property type="evidence" value="ECO:0000315"/>
    <property type="project" value="MGI"/>
</dbReference>
<dbReference type="GO" id="GO:0050650">
    <property type="term" value="P:chondroitin sulfate proteoglycan biosynthetic process"/>
    <property type="evidence" value="ECO:0000315"/>
    <property type="project" value="MGI"/>
</dbReference>
<dbReference type="GO" id="GO:0001958">
    <property type="term" value="P:endochondral ossification"/>
    <property type="evidence" value="ECO:0000315"/>
    <property type="project" value="MGI"/>
</dbReference>
<dbReference type="GO" id="GO:0010467">
    <property type="term" value="P:gene expression"/>
    <property type="evidence" value="ECO:0000314"/>
    <property type="project" value="MGI"/>
</dbReference>
<dbReference type="GO" id="GO:0060173">
    <property type="term" value="P:limb development"/>
    <property type="evidence" value="ECO:0000315"/>
    <property type="project" value="MGI"/>
</dbReference>
<dbReference type="GO" id="GO:0035264">
    <property type="term" value="P:multicellular organism growth"/>
    <property type="evidence" value="ECO:0000314"/>
    <property type="project" value="MGI"/>
</dbReference>
<dbReference type="GO" id="GO:0005976">
    <property type="term" value="P:polysaccharide metabolic process"/>
    <property type="evidence" value="ECO:0000315"/>
    <property type="project" value="MGI"/>
</dbReference>
<dbReference type="GO" id="GO:0006493">
    <property type="term" value="P:protein O-linked glycosylation"/>
    <property type="evidence" value="ECO:0000314"/>
    <property type="project" value="UniProtKB"/>
</dbReference>
<dbReference type="GO" id="GO:0018242">
    <property type="term" value="P:protein O-linked glycosylation via serine"/>
    <property type="evidence" value="ECO:0007669"/>
    <property type="project" value="Ensembl"/>
</dbReference>
<dbReference type="GO" id="GO:0018243">
    <property type="term" value="P:protein O-linked glycosylation via threonine"/>
    <property type="evidence" value="ECO:0007669"/>
    <property type="project" value="Ensembl"/>
</dbReference>
<dbReference type="GO" id="GO:0007283">
    <property type="term" value="P:spermatogenesis"/>
    <property type="evidence" value="ECO:0000315"/>
    <property type="project" value="MGI"/>
</dbReference>
<dbReference type="CDD" id="cd02510">
    <property type="entry name" value="pp-GalNAc-T"/>
    <property type="match status" value="1"/>
</dbReference>
<dbReference type="FunFam" id="2.80.10.50:FF:000024">
    <property type="entry name" value="Polypeptide N-acetylgalactosaminyltransferase"/>
    <property type="match status" value="1"/>
</dbReference>
<dbReference type="FunFam" id="3.90.550.10:FF:000039">
    <property type="entry name" value="Polypeptide N-acetylgalactosaminyltransferase"/>
    <property type="match status" value="1"/>
</dbReference>
<dbReference type="Gene3D" id="2.80.10.50">
    <property type="match status" value="1"/>
</dbReference>
<dbReference type="Gene3D" id="3.90.550.10">
    <property type="entry name" value="Spore Coat Polysaccharide Biosynthesis Protein SpsA, Chain A"/>
    <property type="match status" value="1"/>
</dbReference>
<dbReference type="InterPro" id="IPR045885">
    <property type="entry name" value="GalNAc-T"/>
</dbReference>
<dbReference type="InterPro" id="IPR001173">
    <property type="entry name" value="Glyco_trans_2-like"/>
</dbReference>
<dbReference type="InterPro" id="IPR029044">
    <property type="entry name" value="Nucleotide-diphossugar_trans"/>
</dbReference>
<dbReference type="InterPro" id="IPR035992">
    <property type="entry name" value="Ricin_B-like_lectins"/>
</dbReference>
<dbReference type="InterPro" id="IPR000772">
    <property type="entry name" value="Ricin_B_lectin"/>
</dbReference>
<dbReference type="PANTHER" id="PTHR11675">
    <property type="entry name" value="N-ACETYLGALACTOSAMINYLTRANSFERASE"/>
    <property type="match status" value="1"/>
</dbReference>
<dbReference type="PANTHER" id="PTHR11675:SF33">
    <property type="entry name" value="POLYPEPTIDE N-ACETYLGALACTOSAMINYLTRANSFERASE 3"/>
    <property type="match status" value="1"/>
</dbReference>
<dbReference type="Pfam" id="PF00535">
    <property type="entry name" value="Glycos_transf_2"/>
    <property type="match status" value="1"/>
</dbReference>
<dbReference type="Pfam" id="PF00652">
    <property type="entry name" value="Ricin_B_lectin"/>
    <property type="match status" value="1"/>
</dbReference>
<dbReference type="SMART" id="SM00458">
    <property type="entry name" value="RICIN"/>
    <property type="match status" value="1"/>
</dbReference>
<dbReference type="SUPFAM" id="SSF53448">
    <property type="entry name" value="Nucleotide-diphospho-sugar transferases"/>
    <property type="match status" value="1"/>
</dbReference>
<dbReference type="SUPFAM" id="SSF50370">
    <property type="entry name" value="Ricin B-like lectins"/>
    <property type="match status" value="1"/>
</dbReference>
<dbReference type="PROSITE" id="PS50231">
    <property type="entry name" value="RICIN_B_LECTIN"/>
    <property type="match status" value="1"/>
</dbReference>
<gene>
    <name type="primary">Galnt3</name>
</gene>
<sequence length="633" mass="72932">MAHLKRLVKLHIKRHYHRKFWKLGAVIFFFLVVLILMQREVSVQYSKEESKMERNLKNKNKMLDFMLEAVNNIKDAMPKMQIGAPIKENIDVRERPCLQGYYTAAELKPVFDRPPQDSNAPGASGKPFKITHLSPEEQKEKERGETKHCFNAFASDRISLHRDLGPDTRPPECIEQKFKRCPPLPTTSVIIVFHNEAWSTLLRTVHSVLYSSPAILLKEIILVDDASVDDYLHEKLEEYIKQFSIVKIVRQQERKGLITARLLGAAVATAETLTFLDAHCECFYGWLEPLLARIAENYTAVVSPDIASIDLNTFEFNKPSPYGSNHNRGNFDWSLSFGWESLPDHEKQRRKDETYPIKTPTFAGGLFSISKKYFEHIGSYDEEMEIWGGENIEMSFRVWQCGGQLEIMPCSVVGHVFRSKSPHTFPKGTQVIARNQVRLAEVWMDEYKEIFYRRNTDAAKIVKQKSFGDLSKRFEIKKRLQCKNFTWYLNTIYPEAYVPDLNPVISGYIKSVGQPLCLDVGENNQGGKPLILYTCHGLGGNQYFEYSAQREIRHNIQKELCLHATQGVVQLKACVYKGHRTIAPGEQIWEIRKDQLLYNPLFKMCLSSNGEHPNLVPCDATDLLQKWIFSQND</sequence>
<proteinExistence type="evidence at protein level"/>
<accession>P70419</accession>
<accession>Q3UXL2</accession>
<accession>Q80V55</accession>